<dbReference type="EMBL" id="CP000745">
    <property type="protein sequence ID" value="ABR65716.1"/>
    <property type="molecule type" value="Genomic_DNA"/>
</dbReference>
<dbReference type="SMR" id="A6VGZ0"/>
<dbReference type="STRING" id="426368.MmarC7_0649"/>
<dbReference type="KEGG" id="mmz:MmarC7_0649"/>
<dbReference type="eggNOG" id="arCOG04097">
    <property type="taxonomic scope" value="Archaea"/>
</dbReference>
<dbReference type="HOGENOM" id="CLU_058591_1_1_2"/>
<dbReference type="OrthoDB" id="9126at2157"/>
<dbReference type="GO" id="GO:0022627">
    <property type="term" value="C:cytosolic small ribosomal subunit"/>
    <property type="evidence" value="ECO:0007669"/>
    <property type="project" value="TreeGrafter"/>
</dbReference>
<dbReference type="GO" id="GO:0019843">
    <property type="term" value="F:rRNA binding"/>
    <property type="evidence" value="ECO:0007669"/>
    <property type="project" value="UniProtKB-UniRule"/>
</dbReference>
<dbReference type="GO" id="GO:0003735">
    <property type="term" value="F:structural constituent of ribosome"/>
    <property type="evidence" value="ECO:0007669"/>
    <property type="project" value="InterPro"/>
</dbReference>
<dbReference type="GO" id="GO:0006412">
    <property type="term" value="P:translation"/>
    <property type="evidence" value="ECO:0007669"/>
    <property type="project" value="UniProtKB-UniRule"/>
</dbReference>
<dbReference type="CDD" id="cd02411">
    <property type="entry name" value="KH-II_30S_S3_arch"/>
    <property type="match status" value="1"/>
</dbReference>
<dbReference type="FunFam" id="3.30.300.20:FF:000001">
    <property type="entry name" value="30S ribosomal protein S3"/>
    <property type="match status" value="1"/>
</dbReference>
<dbReference type="Gene3D" id="3.30.300.20">
    <property type="match status" value="1"/>
</dbReference>
<dbReference type="Gene3D" id="3.30.1140.32">
    <property type="entry name" value="Ribosomal protein S3, C-terminal domain"/>
    <property type="match status" value="1"/>
</dbReference>
<dbReference type="HAMAP" id="MF_01309_A">
    <property type="entry name" value="Ribosomal_uS3_A"/>
    <property type="match status" value="1"/>
</dbReference>
<dbReference type="InterPro" id="IPR004087">
    <property type="entry name" value="KH_dom"/>
</dbReference>
<dbReference type="InterPro" id="IPR015946">
    <property type="entry name" value="KH_dom-like_a/b"/>
</dbReference>
<dbReference type="InterPro" id="IPR004044">
    <property type="entry name" value="KH_dom_type_2"/>
</dbReference>
<dbReference type="InterPro" id="IPR009019">
    <property type="entry name" value="KH_sf_prok-type"/>
</dbReference>
<dbReference type="InterPro" id="IPR036419">
    <property type="entry name" value="Ribosomal_S3_C_sf"/>
</dbReference>
<dbReference type="InterPro" id="IPR027488">
    <property type="entry name" value="Ribosomal_uS3_arc"/>
</dbReference>
<dbReference type="InterPro" id="IPR001351">
    <property type="entry name" value="Ribosomal_uS3_C"/>
</dbReference>
<dbReference type="InterPro" id="IPR018280">
    <property type="entry name" value="Ribosomal_uS3_CS"/>
</dbReference>
<dbReference type="InterPro" id="IPR005703">
    <property type="entry name" value="Ribosomal_uS3_euk/arc"/>
</dbReference>
<dbReference type="NCBIfam" id="NF003219">
    <property type="entry name" value="PRK04191.1"/>
    <property type="match status" value="1"/>
</dbReference>
<dbReference type="NCBIfam" id="TIGR01008">
    <property type="entry name" value="uS3_euk_arch"/>
    <property type="match status" value="1"/>
</dbReference>
<dbReference type="PANTHER" id="PTHR11760">
    <property type="entry name" value="30S/40S RIBOSOMAL PROTEIN S3"/>
    <property type="match status" value="1"/>
</dbReference>
<dbReference type="PANTHER" id="PTHR11760:SF32">
    <property type="entry name" value="SMALL RIBOSOMAL SUBUNIT PROTEIN US3"/>
    <property type="match status" value="1"/>
</dbReference>
<dbReference type="Pfam" id="PF07650">
    <property type="entry name" value="KH_2"/>
    <property type="match status" value="1"/>
</dbReference>
<dbReference type="Pfam" id="PF00189">
    <property type="entry name" value="Ribosomal_S3_C"/>
    <property type="match status" value="1"/>
</dbReference>
<dbReference type="SMART" id="SM00322">
    <property type="entry name" value="KH"/>
    <property type="match status" value="1"/>
</dbReference>
<dbReference type="SUPFAM" id="SSF54814">
    <property type="entry name" value="Prokaryotic type KH domain (KH-domain type II)"/>
    <property type="match status" value="1"/>
</dbReference>
<dbReference type="SUPFAM" id="SSF54821">
    <property type="entry name" value="Ribosomal protein S3 C-terminal domain"/>
    <property type="match status" value="1"/>
</dbReference>
<dbReference type="PROSITE" id="PS50823">
    <property type="entry name" value="KH_TYPE_2"/>
    <property type="match status" value="1"/>
</dbReference>
<dbReference type="PROSITE" id="PS00548">
    <property type="entry name" value="RIBOSOMAL_S3"/>
    <property type="match status" value="1"/>
</dbReference>
<proteinExistence type="inferred from homology"/>
<keyword id="KW-0687">Ribonucleoprotein</keyword>
<keyword id="KW-0689">Ribosomal protein</keyword>
<keyword id="KW-0694">RNA-binding</keyword>
<keyword id="KW-0699">rRNA-binding</keyword>
<organism>
    <name type="scientific">Methanococcus maripaludis (strain C7 / ATCC BAA-1331)</name>
    <dbReference type="NCBI Taxonomy" id="426368"/>
    <lineage>
        <taxon>Archaea</taxon>
        <taxon>Methanobacteriati</taxon>
        <taxon>Methanobacteriota</taxon>
        <taxon>Methanomada group</taxon>
        <taxon>Methanococci</taxon>
        <taxon>Methanococcales</taxon>
        <taxon>Methanococcaceae</taxon>
        <taxon>Methanococcus</taxon>
    </lineage>
</organism>
<reference key="1">
    <citation type="submission" date="2007-06" db="EMBL/GenBank/DDBJ databases">
        <title>Complete sequence of Methanococcus maripaludis C7.</title>
        <authorList>
            <consortium name="US DOE Joint Genome Institute"/>
            <person name="Copeland A."/>
            <person name="Lucas S."/>
            <person name="Lapidus A."/>
            <person name="Barry K."/>
            <person name="Glavina del Rio T."/>
            <person name="Dalin E."/>
            <person name="Tice H."/>
            <person name="Pitluck S."/>
            <person name="Clum A."/>
            <person name="Schmutz J."/>
            <person name="Larimer F."/>
            <person name="Land M."/>
            <person name="Hauser L."/>
            <person name="Kyrpides N."/>
            <person name="Anderson I."/>
            <person name="Sieprawska-Lupa M."/>
            <person name="Whitman W.B."/>
            <person name="Richardson P."/>
        </authorList>
    </citation>
    <scope>NUCLEOTIDE SEQUENCE [LARGE SCALE GENOMIC DNA]</scope>
    <source>
        <strain>C7 / ATCC BAA-1331</strain>
    </source>
</reference>
<accession>A6VGZ0</accession>
<name>RS3_METM7</name>
<feature type="chain" id="PRO_1000086133" description="Small ribosomal subunit protein uS3">
    <location>
        <begin position="1"/>
        <end position="211"/>
    </location>
</feature>
<feature type="domain" description="KH type-2" evidence="1">
    <location>
        <begin position="16"/>
        <end position="85"/>
    </location>
</feature>
<evidence type="ECO:0000255" key="1">
    <source>
        <dbReference type="HAMAP-Rule" id="MF_01309"/>
    </source>
</evidence>
<evidence type="ECO:0000305" key="2"/>
<sequence>MIERTFVGENVSETLIDEYFKTKLVRAGYSHIDLKKTPIGTRITVFAEKPGFVIGRKGKMVKELTETLSTEYAVNNPQIEVKQVESPDLDPAIVGHKIASSLERGMHFRKTAHSAIRRVMGSGAKGVSIIVSGKLSGERSRTEKFMDGYMKHCGEPAEALVNKSHQLAKLKLGVVGVTVKIMKPDVSLPDEITILSGEIKEVTEYSEASQE</sequence>
<gene>
    <name evidence="1" type="primary">rps3</name>
    <name type="ordered locus">MmarC7_0649</name>
</gene>
<comment type="function">
    <text evidence="1">Binds the lower part of the 30S subunit head.</text>
</comment>
<comment type="subunit">
    <text evidence="1">Part of the 30S ribosomal subunit.</text>
</comment>
<comment type="similarity">
    <text evidence="1">Belongs to the universal ribosomal protein uS3 family.</text>
</comment>
<protein>
    <recommendedName>
        <fullName evidence="1">Small ribosomal subunit protein uS3</fullName>
    </recommendedName>
    <alternativeName>
        <fullName evidence="2">30S ribosomal protein S3</fullName>
    </alternativeName>
</protein>